<proteinExistence type="evidence at transcript level"/>
<reference key="1">
    <citation type="journal article" date="1999" name="Nature">
        <title>Sequence and analysis of chromosome 4 of the plant Arabidopsis thaliana.</title>
        <authorList>
            <person name="Mayer K.F.X."/>
            <person name="Schueller C."/>
            <person name="Wambutt R."/>
            <person name="Murphy G."/>
            <person name="Volckaert G."/>
            <person name="Pohl T."/>
            <person name="Duesterhoeft A."/>
            <person name="Stiekema W."/>
            <person name="Entian K.-D."/>
            <person name="Terryn N."/>
            <person name="Harris B."/>
            <person name="Ansorge W."/>
            <person name="Brandt P."/>
            <person name="Grivell L.A."/>
            <person name="Rieger M."/>
            <person name="Weichselgartner M."/>
            <person name="de Simone V."/>
            <person name="Obermaier B."/>
            <person name="Mache R."/>
            <person name="Mueller M."/>
            <person name="Kreis M."/>
            <person name="Delseny M."/>
            <person name="Puigdomenech P."/>
            <person name="Watson M."/>
            <person name="Schmidtheini T."/>
            <person name="Reichert B."/>
            <person name="Portetelle D."/>
            <person name="Perez-Alonso M."/>
            <person name="Boutry M."/>
            <person name="Bancroft I."/>
            <person name="Vos P."/>
            <person name="Hoheisel J."/>
            <person name="Zimmermann W."/>
            <person name="Wedler H."/>
            <person name="Ridley P."/>
            <person name="Langham S.-A."/>
            <person name="McCullagh B."/>
            <person name="Bilham L."/>
            <person name="Robben J."/>
            <person name="van der Schueren J."/>
            <person name="Grymonprez B."/>
            <person name="Chuang Y.-J."/>
            <person name="Vandenbussche F."/>
            <person name="Braeken M."/>
            <person name="Weltjens I."/>
            <person name="Voet M."/>
            <person name="Bastiaens I."/>
            <person name="Aert R."/>
            <person name="Defoor E."/>
            <person name="Weitzenegger T."/>
            <person name="Bothe G."/>
            <person name="Ramsperger U."/>
            <person name="Hilbert H."/>
            <person name="Braun M."/>
            <person name="Holzer E."/>
            <person name="Brandt A."/>
            <person name="Peters S."/>
            <person name="van Staveren M."/>
            <person name="Dirkse W."/>
            <person name="Mooijman P."/>
            <person name="Klein Lankhorst R."/>
            <person name="Rose M."/>
            <person name="Hauf J."/>
            <person name="Koetter P."/>
            <person name="Berneiser S."/>
            <person name="Hempel S."/>
            <person name="Feldpausch M."/>
            <person name="Lamberth S."/>
            <person name="Van den Daele H."/>
            <person name="De Keyser A."/>
            <person name="Buysshaert C."/>
            <person name="Gielen J."/>
            <person name="Villarroel R."/>
            <person name="De Clercq R."/>
            <person name="van Montagu M."/>
            <person name="Rogers J."/>
            <person name="Cronin A."/>
            <person name="Quail M.A."/>
            <person name="Bray-Allen S."/>
            <person name="Clark L."/>
            <person name="Doggett J."/>
            <person name="Hall S."/>
            <person name="Kay M."/>
            <person name="Lennard N."/>
            <person name="McLay K."/>
            <person name="Mayes R."/>
            <person name="Pettett A."/>
            <person name="Rajandream M.A."/>
            <person name="Lyne M."/>
            <person name="Benes V."/>
            <person name="Rechmann S."/>
            <person name="Borkova D."/>
            <person name="Bloecker H."/>
            <person name="Scharfe M."/>
            <person name="Grimm M."/>
            <person name="Loehnert T.-H."/>
            <person name="Dose S."/>
            <person name="de Haan M."/>
            <person name="Maarse A.C."/>
            <person name="Schaefer M."/>
            <person name="Mueller-Auer S."/>
            <person name="Gabel C."/>
            <person name="Fuchs M."/>
            <person name="Fartmann B."/>
            <person name="Granderath K."/>
            <person name="Dauner D."/>
            <person name="Herzl A."/>
            <person name="Neumann S."/>
            <person name="Argiriou A."/>
            <person name="Vitale D."/>
            <person name="Liguori R."/>
            <person name="Piravandi E."/>
            <person name="Massenet O."/>
            <person name="Quigley F."/>
            <person name="Clabauld G."/>
            <person name="Muendlein A."/>
            <person name="Felber R."/>
            <person name="Schnabl S."/>
            <person name="Hiller R."/>
            <person name="Schmidt W."/>
            <person name="Lecharny A."/>
            <person name="Aubourg S."/>
            <person name="Chefdor F."/>
            <person name="Cooke R."/>
            <person name="Berger C."/>
            <person name="Monfort A."/>
            <person name="Casacuberta E."/>
            <person name="Gibbons T."/>
            <person name="Weber N."/>
            <person name="Vandenbol M."/>
            <person name="Bargues M."/>
            <person name="Terol J."/>
            <person name="Torres A."/>
            <person name="Perez-Perez A."/>
            <person name="Purnelle B."/>
            <person name="Bent E."/>
            <person name="Johnson S."/>
            <person name="Tacon D."/>
            <person name="Jesse T."/>
            <person name="Heijnen L."/>
            <person name="Schwarz S."/>
            <person name="Scholler P."/>
            <person name="Heber S."/>
            <person name="Francs P."/>
            <person name="Bielke C."/>
            <person name="Frishman D."/>
            <person name="Haase D."/>
            <person name="Lemcke K."/>
            <person name="Mewes H.-W."/>
            <person name="Stocker S."/>
            <person name="Zaccaria P."/>
            <person name="Bevan M."/>
            <person name="Wilson R.K."/>
            <person name="de la Bastide M."/>
            <person name="Habermann K."/>
            <person name="Parnell L."/>
            <person name="Dedhia N."/>
            <person name="Gnoj L."/>
            <person name="Schutz K."/>
            <person name="Huang E."/>
            <person name="Spiegel L."/>
            <person name="Sekhon M."/>
            <person name="Murray J."/>
            <person name="Sheet P."/>
            <person name="Cordes M."/>
            <person name="Abu-Threideh J."/>
            <person name="Stoneking T."/>
            <person name="Kalicki J."/>
            <person name="Graves T."/>
            <person name="Harmon G."/>
            <person name="Edwards J."/>
            <person name="Latreille P."/>
            <person name="Courtney L."/>
            <person name="Cloud J."/>
            <person name="Abbott A."/>
            <person name="Scott K."/>
            <person name="Johnson D."/>
            <person name="Minx P."/>
            <person name="Bentley D."/>
            <person name="Fulton B."/>
            <person name="Miller N."/>
            <person name="Greco T."/>
            <person name="Kemp K."/>
            <person name="Kramer J."/>
            <person name="Fulton L."/>
            <person name="Mardis E."/>
            <person name="Dante M."/>
            <person name="Pepin K."/>
            <person name="Hillier L.W."/>
            <person name="Nelson J."/>
            <person name="Spieth J."/>
            <person name="Ryan E."/>
            <person name="Andrews S."/>
            <person name="Geisel C."/>
            <person name="Layman D."/>
            <person name="Du H."/>
            <person name="Ali J."/>
            <person name="Berghoff A."/>
            <person name="Jones K."/>
            <person name="Drone K."/>
            <person name="Cotton M."/>
            <person name="Joshu C."/>
            <person name="Antonoiu B."/>
            <person name="Zidanic M."/>
            <person name="Strong C."/>
            <person name="Sun H."/>
            <person name="Lamar B."/>
            <person name="Yordan C."/>
            <person name="Ma P."/>
            <person name="Zhong J."/>
            <person name="Preston R."/>
            <person name="Vil D."/>
            <person name="Shekher M."/>
            <person name="Matero A."/>
            <person name="Shah R."/>
            <person name="Swaby I.K."/>
            <person name="O'Shaughnessy A."/>
            <person name="Rodriguez M."/>
            <person name="Hoffman J."/>
            <person name="Till S."/>
            <person name="Granat S."/>
            <person name="Shohdy N."/>
            <person name="Hasegawa A."/>
            <person name="Hameed A."/>
            <person name="Lodhi M."/>
            <person name="Johnson A."/>
            <person name="Chen E."/>
            <person name="Marra M.A."/>
            <person name="Martienssen R."/>
            <person name="McCombie W.R."/>
        </authorList>
    </citation>
    <scope>NUCLEOTIDE SEQUENCE [LARGE SCALE GENOMIC DNA]</scope>
    <source>
        <strain>cv. Columbia</strain>
    </source>
</reference>
<reference key="2">
    <citation type="journal article" date="2017" name="Plant J.">
        <title>Araport11: a complete reannotation of the Arabidopsis thaliana reference genome.</title>
        <authorList>
            <person name="Cheng C.Y."/>
            <person name="Krishnakumar V."/>
            <person name="Chan A.P."/>
            <person name="Thibaud-Nissen F."/>
            <person name="Schobel S."/>
            <person name="Town C.D."/>
        </authorList>
    </citation>
    <scope>GENOME REANNOTATION</scope>
    <source>
        <strain>cv. Columbia</strain>
    </source>
</reference>
<reference key="3">
    <citation type="journal article" date="2003" name="Science">
        <title>Empirical analysis of transcriptional activity in the Arabidopsis genome.</title>
        <authorList>
            <person name="Yamada K."/>
            <person name="Lim J."/>
            <person name="Dale J.M."/>
            <person name="Chen H."/>
            <person name="Shinn P."/>
            <person name="Palm C.J."/>
            <person name="Southwick A.M."/>
            <person name="Wu H.C."/>
            <person name="Kim C.J."/>
            <person name="Nguyen M."/>
            <person name="Pham P.K."/>
            <person name="Cheuk R.F."/>
            <person name="Karlin-Newmann G."/>
            <person name="Liu S.X."/>
            <person name="Lam B."/>
            <person name="Sakano H."/>
            <person name="Wu T."/>
            <person name="Yu G."/>
            <person name="Miranda M."/>
            <person name="Quach H.L."/>
            <person name="Tripp M."/>
            <person name="Chang C.H."/>
            <person name="Lee J.M."/>
            <person name="Toriumi M.J."/>
            <person name="Chan M.M."/>
            <person name="Tang C.C."/>
            <person name="Onodera C.S."/>
            <person name="Deng J.M."/>
            <person name="Akiyama K."/>
            <person name="Ansari Y."/>
            <person name="Arakawa T."/>
            <person name="Banh J."/>
            <person name="Banno F."/>
            <person name="Bowser L."/>
            <person name="Brooks S.Y."/>
            <person name="Carninci P."/>
            <person name="Chao Q."/>
            <person name="Choy N."/>
            <person name="Enju A."/>
            <person name="Goldsmith A.D."/>
            <person name="Gurjal M."/>
            <person name="Hansen N.F."/>
            <person name="Hayashizaki Y."/>
            <person name="Johnson-Hopson C."/>
            <person name="Hsuan V.W."/>
            <person name="Iida K."/>
            <person name="Karnes M."/>
            <person name="Khan S."/>
            <person name="Koesema E."/>
            <person name="Ishida J."/>
            <person name="Jiang P.X."/>
            <person name="Jones T."/>
            <person name="Kawai J."/>
            <person name="Kamiya A."/>
            <person name="Meyers C."/>
            <person name="Nakajima M."/>
            <person name="Narusaka M."/>
            <person name="Seki M."/>
            <person name="Sakurai T."/>
            <person name="Satou M."/>
            <person name="Tamse R."/>
            <person name="Vaysberg M."/>
            <person name="Wallender E.K."/>
            <person name="Wong C."/>
            <person name="Yamamura Y."/>
            <person name="Yuan S."/>
            <person name="Shinozaki K."/>
            <person name="Davis R.W."/>
            <person name="Theologis A."/>
            <person name="Ecker J.R."/>
        </authorList>
    </citation>
    <scope>NUCLEOTIDE SEQUENCE [LARGE SCALE MRNA] (ISOFORM 1)</scope>
    <source>
        <strain>cv. Columbia</strain>
    </source>
</reference>
<reference key="4">
    <citation type="journal article" date="2009" name="DNA Res.">
        <title>Analysis of multiple occurrences of alternative splicing events in Arabidopsis thaliana using novel sequenced full-length cDNAs.</title>
        <authorList>
            <person name="Iida K."/>
            <person name="Fukami-Kobayashi K."/>
            <person name="Toyoda A."/>
            <person name="Sakaki Y."/>
            <person name="Kobayashi M."/>
            <person name="Seki M."/>
            <person name="Shinozaki K."/>
        </authorList>
    </citation>
    <scope>NUCLEOTIDE SEQUENCE [LARGE SCALE MRNA] (ISOFORMS 1 AND 2)</scope>
    <source>
        <strain>cv. Columbia</strain>
    </source>
</reference>
<reference key="5">
    <citation type="submission" date="2002-03" db="EMBL/GenBank/DDBJ databases">
        <title>Full-length cDNA from Arabidopsis thaliana.</title>
        <authorList>
            <person name="Brover V.V."/>
            <person name="Troukhan M.E."/>
            <person name="Alexandrov N.A."/>
            <person name="Lu Y.-P."/>
            <person name="Flavell R.B."/>
            <person name="Feldmann K.A."/>
        </authorList>
    </citation>
    <scope>NUCLEOTIDE SEQUENCE [LARGE SCALE MRNA] (ISOFORM 1)</scope>
</reference>
<reference key="6">
    <citation type="journal article" date="2002" name="J. Biol. Chem.">
        <title>Functional cloning and characterization of a plant efflux carrier for multidrug and heavy metal detoxification.</title>
        <authorList>
            <person name="Li L."/>
            <person name="He Z."/>
            <person name="Pandey G.K."/>
            <person name="Tsuchiya T."/>
            <person name="Luan S."/>
        </authorList>
    </citation>
    <scope>GENE FAMILY</scope>
    <scope>NOMENCLATURE</scope>
</reference>
<reference key="7">
    <citation type="journal article" date="2003" name="Eur. J. Biochem.">
        <title>The multidrug/oligosaccharidyl-lipid/polysaccharide (MOP) exporter superfamily.</title>
        <authorList>
            <person name="Hvorup R.N."/>
            <person name="Winnen B."/>
            <person name="Chang A.B."/>
            <person name="Jiang Y."/>
            <person name="Zhou X.F."/>
            <person name="Saier M.H. Jr."/>
        </authorList>
    </citation>
    <scope>GENE FAMILY</scope>
</reference>
<feature type="chain" id="PRO_0000434080" description="Protein DETOXIFICATION 39">
    <location>
        <begin position="1"/>
        <end position="507"/>
    </location>
</feature>
<feature type="transmembrane region" description="Helical" evidence="1">
    <location>
        <begin position="58"/>
        <end position="78"/>
    </location>
</feature>
<feature type="transmembrane region" description="Helical" evidence="1">
    <location>
        <begin position="92"/>
        <end position="112"/>
    </location>
</feature>
<feature type="transmembrane region" description="Helical" evidence="1">
    <location>
        <begin position="141"/>
        <end position="161"/>
    </location>
</feature>
<feature type="transmembrane region" description="Helical" evidence="1">
    <location>
        <begin position="178"/>
        <end position="198"/>
    </location>
</feature>
<feature type="transmembrane region" description="Helical" evidence="1">
    <location>
        <begin position="209"/>
        <end position="229"/>
    </location>
</feature>
<feature type="transmembrane region" description="Helical" evidence="1">
    <location>
        <begin position="233"/>
        <end position="253"/>
    </location>
</feature>
<feature type="transmembrane region" description="Helical" evidence="1">
    <location>
        <begin position="287"/>
        <end position="307"/>
    </location>
</feature>
<feature type="transmembrane region" description="Helical" evidence="1">
    <location>
        <begin position="318"/>
        <end position="338"/>
    </location>
</feature>
<feature type="transmembrane region" description="Helical" evidence="1">
    <location>
        <begin position="359"/>
        <end position="379"/>
    </location>
</feature>
<feature type="transmembrane region" description="Helical" evidence="1">
    <location>
        <begin position="403"/>
        <end position="423"/>
    </location>
</feature>
<feature type="transmembrane region" description="Helical" evidence="1">
    <location>
        <begin position="433"/>
        <end position="453"/>
    </location>
</feature>
<feature type="transmembrane region" description="Helical" evidence="1">
    <location>
        <begin position="459"/>
        <end position="479"/>
    </location>
</feature>
<feature type="splice variant" id="VSP_057897" description="In isoform 2.">
    <original>MDVSNETVERTDLRTPLVDPADTEVKPLPEVGLESVLTESSLSYRRRVYLGACIELKVLFRLALPAILIYLVNSGMGISARVFAGHVGSQELAAASIGNSCFN</original>
    <variation>MEVPSETTNLADLRRPLVVPVVSERKPPADVGLGLESVLTERSLPYRRRVYLGACIEMKLLFRLALPAILVYLVNSGMGISARIFAGHLGKNELAAASIGNSCFS</variation>
    <location>
        <begin position="1"/>
        <end position="103"/>
    </location>
</feature>
<feature type="sequence conflict" description="In Ref. 5; AAM62936." evidence="3" ref="5">
    <original>C</original>
    <variation>G</variation>
    <location>
        <position position="53"/>
    </location>
</feature>
<feature type="sequence conflict" description="In Ref. 4; BAH19969." evidence="3" ref="4">
    <original>T</original>
    <variation>A</variation>
    <location>
        <position position="264"/>
    </location>
</feature>
<feature type="sequence conflict" description="In Ref. 4; BAH19969." evidence="3" ref="4">
    <original>A</original>
    <variation>T</variation>
    <location>
        <position position="325"/>
    </location>
</feature>
<organism>
    <name type="scientific">Arabidopsis thaliana</name>
    <name type="common">Mouse-ear cress</name>
    <dbReference type="NCBI Taxonomy" id="3702"/>
    <lineage>
        <taxon>Eukaryota</taxon>
        <taxon>Viridiplantae</taxon>
        <taxon>Streptophyta</taxon>
        <taxon>Embryophyta</taxon>
        <taxon>Tracheophyta</taxon>
        <taxon>Spermatophyta</taxon>
        <taxon>Magnoliopsida</taxon>
        <taxon>eudicotyledons</taxon>
        <taxon>Gunneridae</taxon>
        <taxon>Pentapetalae</taxon>
        <taxon>rosids</taxon>
        <taxon>malvids</taxon>
        <taxon>Brassicales</taxon>
        <taxon>Brassicaceae</taxon>
        <taxon>Camelineae</taxon>
        <taxon>Arabidopsis</taxon>
    </lineage>
</organism>
<evidence type="ECO:0000255" key="1"/>
<evidence type="ECO:0000303" key="2">
    <source>
    </source>
</evidence>
<evidence type="ECO:0000305" key="3"/>
<evidence type="ECO:0000312" key="4">
    <source>
        <dbReference type="Araport" id="AT4G21910"/>
    </source>
</evidence>
<evidence type="ECO:0000312" key="5">
    <source>
        <dbReference type="EMBL" id="CAA17158.1"/>
    </source>
</evidence>
<accession>Q940N9</accession>
<accession>B9DGV2</accession>
<accession>F4JKC0</accession>
<accession>F4JKC2</accession>
<accession>O49714</accession>
<accession>Q8LDZ2</accession>
<keyword id="KW-0025">Alternative splicing</keyword>
<keyword id="KW-0472">Membrane</keyword>
<keyword id="KW-1185">Reference proteome</keyword>
<keyword id="KW-0812">Transmembrane</keyword>
<keyword id="KW-1133">Transmembrane helix</keyword>
<keyword id="KW-0813">Transport</keyword>
<name>DTX39_ARATH</name>
<protein>
    <recommendedName>
        <fullName evidence="2">Protein DETOXIFICATION 39</fullName>
        <shortName evidence="2">AtDTX39</shortName>
    </recommendedName>
    <alternativeName>
        <fullName evidence="3">Multidrug and toxic compound extrusion protein 39</fullName>
        <shortName evidence="3">MATE protein 39</shortName>
    </alternativeName>
</protein>
<sequence length="507" mass="55690">MDVSNETVERTDLRTPLVDPADTEVKPLPEVGLESVLTESSLSYRRRVYLGACIELKVLFRLALPAILIYLVNSGMGISARVFAGHVGSQELAAASIGNSCFNLVYGLMLGMGSAVETLCGQAYGAHRYEMLGIYLQRATIVLALVGLPMTLLYTFSYPILILLGEPKTVSYMGSKYIAGLIPQIFAYAVNFTAQKFLQAQSVVAPSAFISAAALILQILLTWITVYVMDMGFMGIAYVLTISWWVIVGSQCFYIAVSPKFRHTWTGLSWRSLQGLWSFFKLSAGSAVMICLEMWYSQILVLLAGLLENPARSLDSLSICMSISALSFMVSVGFNAAVSVRTSNELGAGNPKSAWFSTWTATFVSFVISVTEALAVIWFRDYVSYIFTEDADVAKAVSDLCPFLAITIILNGIQPVLSGVAVGCGWQTYVAYVNVGCYYVVGIPVGCILGFTFDFQAKGIWTGMIGGTLMQTLILLYVTYRTDWDKEVEKARKRLDLWDDKKEPLQN</sequence>
<comment type="subcellular location">
    <subcellularLocation>
        <location evidence="1">Membrane</location>
        <topology evidence="1">Multi-pass membrane protein</topology>
    </subcellularLocation>
</comment>
<comment type="alternative products">
    <event type="alternative splicing"/>
    <isoform>
        <id>Q940N9-1</id>
        <name>1</name>
        <sequence type="displayed"/>
    </isoform>
    <isoform>
        <id>Q940N9-2</id>
        <name>2</name>
        <sequence type="described" ref="VSP_057897"/>
    </isoform>
</comment>
<comment type="similarity">
    <text evidence="3">Belongs to the multi antimicrobial extrusion (MATE) (TC 2.A.66.1) family.</text>
</comment>
<comment type="sequence caution" evidence="3">
    <conflict type="erroneous gene model prediction">
        <sequence resource="EMBL-CDS" id="CAA17158"/>
    </conflict>
</comment>
<comment type="sequence caution" evidence="3">
    <conflict type="erroneous gene model prediction">
        <sequence resource="EMBL-CDS" id="CAB79146"/>
    </conflict>
</comment>
<gene>
    <name evidence="2" type="primary">DTX39</name>
    <name evidence="4" type="ordered locus">At4g21910</name>
    <name evidence="5" type="ORF">T8O5.120</name>
</gene>
<dbReference type="EMBL" id="AL021890">
    <property type="protein sequence ID" value="CAA17158.1"/>
    <property type="status" value="ALT_SEQ"/>
    <property type="molecule type" value="Genomic_DNA"/>
</dbReference>
<dbReference type="EMBL" id="AL161556">
    <property type="protein sequence ID" value="CAB79146.1"/>
    <property type="status" value="ALT_SEQ"/>
    <property type="molecule type" value="Genomic_DNA"/>
</dbReference>
<dbReference type="EMBL" id="CP002687">
    <property type="protein sequence ID" value="AEE84525.1"/>
    <property type="molecule type" value="Genomic_DNA"/>
</dbReference>
<dbReference type="EMBL" id="CP002687">
    <property type="protein sequence ID" value="AEE84526.1"/>
    <property type="molecule type" value="Genomic_DNA"/>
</dbReference>
<dbReference type="EMBL" id="CP002687">
    <property type="protein sequence ID" value="AEE84527.1"/>
    <property type="molecule type" value="Genomic_DNA"/>
</dbReference>
<dbReference type="EMBL" id="CP002687">
    <property type="protein sequence ID" value="AEE84528.2"/>
    <property type="molecule type" value="Genomic_DNA"/>
</dbReference>
<dbReference type="EMBL" id="AY054235">
    <property type="protein sequence ID" value="AAL06895.1"/>
    <property type="molecule type" value="mRNA"/>
</dbReference>
<dbReference type="EMBL" id="AY133521">
    <property type="protein sequence ID" value="AAM91351.1"/>
    <property type="molecule type" value="mRNA"/>
</dbReference>
<dbReference type="EMBL" id="AK316904">
    <property type="protein sequence ID" value="BAH19610.1"/>
    <property type="molecule type" value="mRNA"/>
</dbReference>
<dbReference type="EMBL" id="AK317293">
    <property type="protein sequence ID" value="BAH19969.1"/>
    <property type="molecule type" value="mRNA"/>
</dbReference>
<dbReference type="EMBL" id="AY085718">
    <property type="protein sequence ID" value="AAM62936.1"/>
    <property type="molecule type" value="mRNA"/>
</dbReference>
<dbReference type="PIR" id="T05473">
    <property type="entry name" value="T05473"/>
</dbReference>
<dbReference type="RefSeq" id="NP_001320028.1">
    <molecule id="Q940N9-2"/>
    <property type="nucleotide sequence ID" value="NM_001341522.1"/>
</dbReference>
<dbReference type="RefSeq" id="NP_567640.1">
    <molecule id="Q940N9-1"/>
    <property type="nucleotide sequence ID" value="NM_118312.2"/>
</dbReference>
<dbReference type="RefSeq" id="NP_974587.1">
    <molecule id="Q940N9-2"/>
    <property type="nucleotide sequence ID" value="NM_202858.2"/>
</dbReference>
<dbReference type="RefSeq" id="NP_974588.1">
    <molecule id="Q940N9-1"/>
    <property type="nucleotide sequence ID" value="NM_202859.2"/>
</dbReference>
<dbReference type="SMR" id="Q940N9"/>
<dbReference type="FunCoup" id="Q940N9">
    <property type="interactions" value="189"/>
</dbReference>
<dbReference type="IntAct" id="Q940N9">
    <property type="interactions" value="1"/>
</dbReference>
<dbReference type="STRING" id="3702.Q940N9"/>
<dbReference type="PaxDb" id="3702-AT4G21910.4"/>
<dbReference type="ProteomicsDB" id="222187">
    <molecule id="Q940N9-1"/>
</dbReference>
<dbReference type="EnsemblPlants" id="AT4G21910.1">
    <molecule id="Q940N9-1"/>
    <property type="protein sequence ID" value="AT4G21910.1"/>
    <property type="gene ID" value="AT4G21910"/>
</dbReference>
<dbReference type="EnsemblPlants" id="AT4G21910.2">
    <molecule id="Q940N9-2"/>
    <property type="protein sequence ID" value="AT4G21910.2"/>
    <property type="gene ID" value="AT4G21910"/>
</dbReference>
<dbReference type="EnsemblPlants" id="AT4G21910.3">
    <molecule id="Q940N9-1"/>
    <property type="protein sequence ID" value="AT4G21910.3"/>
    <property type="gene ID" value="AT4G21910"/>
</dbReference>
<dbReference type="EnsemblPlants" id="AT4G21910.4">
    <molecule id="Q940N9-2"/>
    <property type="protein sequence ID" value="AT4G21910.4"/>
    <property type="gene ID" value="AT4G21910"/>
</dbReference>
<dbReference type="GeneID" id="828280"/>
<dbReference type="Gramene" id="AT4G21910.1">
    <molecule id="Q940N9-1"/>
    <property type="protein sequence ID" value="AT4G21910.1"/>
    <property type="gene ID" value="AT4G21910"/>
</dbReference>
<dbReference type="Gramene" id="AT4G21910.2">
    <molecule id="Q940N9-2"/>
    <property type="protein sequence ID" value="AT4G21910.2"/>
    <property type="gene ID" value="AT4G21910"/>
</dbReference>
<dbReference type="Gramene" id="AT4G21910.3">
    <molecule id="Q940N9-1"/>
    <property type="protein sequence ID" value="AT4G21910.3"/>
    <property type="gene ID" value="AT4G21910"/>
</dbReference>
<dbReference type="Gramene" id="AT4G21910.4">
    <molecule id="Q940N9-2"/>
    <property type="protein sequence ID" value="AT4G21910.4"/>
    <property type="gene ID" value="AT4G21910"/>
</dbReference>
<dbReference type="KEGG" id="ath:AT4G21910"/>
<dbReference type="Araport" id="AT4G21910"/>
<dbReference type="TAIR" id="AT4G21910"/>
<dbReference type="eggNOG" id="KOG1347">
    <property type="taxonomic scope" value="Eukaryota"/>
</dbReference>
<dbReference type="InParanoid" id="Q940N9"/>
<dbReference type="OMA" id="WPTEIAR"/>
<dbReference type="OrthoDB" id="2126698at2759"/>
<dbReference type="PhylomeDB" id="Q940N9"/>
<dbReference type="PRO" id="PR:Q940N9"/>
<dbReference type="Proteomes" id="UP000006548">
    <property type="component" value="Chromosome 4"/>
</dbReference>
<dbReference type="ExpressionAtlas" id="Q940N9">
    <property type="expression patterns" value="baseline and differential"/>
</dbReference>
<dbReference type="GO" id="GO:0016020">
    <property type="term" value="C:membrane"/>
    <property type="evidence" value="ECO:0007669"/>
    <property type="project" value="UniProtKB-SubCell"/>
</dbReference>
<dbReference type="GO" id="GO:0015297">
    <property type="term" value="F:antiporter activity"/>
    <property type="evidence" value="ECO:0007669"/>
    <property type="project" value="InterPro"/>
</dbReference>
<dbReference type="GO" id="GO:0042910">
    <property type="term" value="F:xenobiotic transmembrane transporter activity"/>
    <property type="evidence" value="ECO:0007669"/>
    <property type="project" value="InterPro"/>
</dbReference>
<dbReference type="GO" id="GO:1990961">
    <property type="term" value="P:xenobiotic detoxification by transmembrane export across the plasma membrane"/>
    <property type="evidence" value="ECO:0007669"/>
    <property type="project" value="InterPro"/>
</dbReference>
<dbReference type="CDD" id="cd13132">
    <property type="entry name" value="MATE_eukaryotic"/>
    <property type="match status" value="1"/>
</dbReference>
<dbReference type="InterPro" id="IPR045069">
    <property type="entry name" value="MATE_euk"/>
</dbReference>
<dbReference type="InterPro" id="IPR002528">
    <property type="entry name" value="MATE_fam"/>
</dbReference>
<dbReference type="NCBIfam" id="TIGR00797">
    <property type="entry name" value="matE"/>
    <property type="match status" value="1"/>
</dbReference>
<dbReference type="PANTHER" id="PTHR11206">
    <property type="entry name" value="MULTIDRUG RESISTANCE PROTEIN"/>
    <property type="match status" value="1"/>
</dbReference>
<dbReference type="Pfam" id="PF01554">
    <property type="entry name" value="MatE"/>
    <property type="match status" value="2"/>
</dbReference>